<comment type="function">
    <text evidence="1">Transcriptional repressor.</text>
</comment>
<comment type="subunit">
    <text evidence="5">Part of a complex containing at least CDYL, MIER1, MIER2, HDAC1 and HDAC2.</text>
</comment>
<comment type="interaction">
    <interactant intactId="EBI-3504938">
        <id>Q8N344</id>
    </interactant>
    <interactant intactId="EBI-17178971">
        <id>Q14005-2</id>
        <label>IL16</label>
    </interactant>
    <organismsDiffer>false</organismsDiffer>
    <experiments>5</experiments>
</comment>
<comment type="interaction">
    <interactant intactId="EBI-3504938">
        <id>Q8N344</id>
    </interactant>
    <interactant intactId="EBI-348259">
        <id>Q96EZ8</id>
        <label>MCRS1</label>
    </interactant>
    <organismsDiffer>false</organismsDiffer>
    <experiments>5</experiments>
</comment>
<comment type="subcellular location">
    <subcellularLocation>
        <location evidence="2 3">Nucleus</location>
    </subcellularLocation>
</comment>
<comment type="sequence caution" evidence="7">
    <conflict type="erroneous translation">
        <sequence resource="EMBL-CDS" id="BAA86507"/>
    </conflict>
    <text>Wrong choice of frame.</text>
</comment>
<evidence type="ECO:0000250" key="1"/>
<evidence type="ECO:0000255" key="2">
    <source>
        <dbReference type="PROSITE-ProRule" id="PRU00512"/>
    </source>
</evidence>
<evidence type="ECO:0000255" key="3">
    <source>
        <dbReference type="PROSITE-ProRule" id="PRU00624"/>
    </source>
</evidence>
<evidence type="ECO:0000256" key="4">
    <source>
        <dbReference type="SAM" id="MobiDB-lite"/>
    </source>
</evidence>
<evidence type="ECO:0000269" key="5">
    <source>
    </source>
</evidence>
<evidence type="ECO:0000269" key="6">
    <source>
    </source>
</evidence>
<evidence type="ECO:0000305" key="7"/>
<evidence type="ECO:0007744" key="8">
    <source>
    </source>
</evidence>
<proteinExistence type="evidence at protein level"/>
<name>MIER2_HUMAN</name>
<keyword id="KW-0539">Nucleus</keyword>
<keyword id="KW-0597">Phosphoprotein</keyword>
<keyword id="KW-1267">Proteomics identification</keyword>
<keyword id="KW-1185">Reference proteome</keyword>
<keyword id="KW-0678">Repressor</keyword>
<keyword id="KW-0804">Transcription</keyword>
<keyword id="KW-0805">Transcription regulation</keyword>
<organism>
    <name type="scientific">Homo sapiens</name>
    <name type="common">Human</name>
    <dbReference type="NCBI Taxonomy" id="9606"/>
    <lineage>
        <taxon>Eukaryota</taxon>
        <taxon>Metazoa</taxon>
        <taxon>Chordata</taxon>
        <taxon>Craniata</taxon>
        <taxon>Vertebrata</taxon>
        <taxon>Euteleostomi</taxon>
        <taxon>Mammalia</taxon>
        <taxon>Eutheria</taxon>
        <taxon>Euarchontoglires</taxon>
        <taxon>Primates</taxon>
        <taxon>Haplorrhini</taxon>
        <taxon>Catarrhini</taxon>
        <taxon>Hominidae</taxon>
        <taxon>Homo</taxon>
    </lineage>
</organism>
<sequence>MAEASSLGRQSPRVVSCLEHSLCPGEPGLQTTAVVSMGSGDHQFNLAEILSQNYSVRGECEEASRCPDKPKEELEKDFISQSNDMPFDELLALYGYEASDPISDRESEGGDVAPNLPDMTLDKEQIAKDLLSGEEEEETQSSADDLTPSVTSHEASDLFPNRSGSRFLADEDREPGSSASSDTEEDSLPANKCKKEIMVGPQFQADLSNLHLNRHCEKIYENEDQLLWDPSVLPEREVEEFLYRAVKRRWHEMAGPQLPEGEAVKDSEQALYELVKCNFNVEEALRRLRFNVKVIRDGLCAWSEEECRNFEHGFRVHGKNFHLIQANKVRTRSVGECVEYYYLWKKSERYDYFAQQTRLGRRKYVPSGTTDADQDLDGSDPDGPGRPRPEQDTLTGMRTDPLSVDGTAGGLDEPGVASDGLPSSEPGPCSFQQLDESPAVPLSHRPPALADPASYQPAVTAPEPDASPRLAVDFALPKELPLISSHVDLSGDPEETVAPAQVALSVTEFGLIGIGDVNPFLAAHPTCPAPGLHSEPLSHCNVMTC</sequence>
<gene>
    <name type="primary">MIER2</name>
    <name type="synonym">KIAA1193</name>
</gene>
<dbReference type="EMBL" id="BC028203">
    <property type="protein sequence ID" value="AAH28203.2"/>
    <property type="molecule type" value="mRNA"/>
</dbReference>
<dbReference type="EMBL" id="AB033019">
    <property type="protein sequence ID" value="BAA86507.2"/>
    <property type="status" value="ALT_SEQ"/>
    <property type="molecule type" value="mRNA"/>
</dbReference>
<dbReference type="CCDS" id="CCDS32855.1"/>
<dbReference type="RefSeq" id="NP_060020.1">
    <property type="nucleotide sequence ID" value="NM_017550.3"/>
</dbReference>
<dbReference type="BioGRID" id="120019">
    <property type="interactions" value="37"/>
</dbReference>
<dbReference type="ComplexPortal" id="CPX-9163">
    <property type="entry name" value="MIER2 histone deacetylase complex, HDAC1 variant"/>
</dbReference>
<dbReference type="ComplexPortal" id="CPX-9167">
    <property type="entry name" value="MIER2 histone deacetylase complex, HDAC2 variant"/>
</dbReference>
<dbReference type="CORUM" id="Q8N344"/>
<dbReference type="FunCoup" id="Q8N344">
    <property type="interactions" value="2259"/>
</dbReference>
<dbReference type="IntAct" id="Q8N344">
    <property type="interactions" value="34"/>
</dbReference>
<dbReference type="MINT" id="Q8N344"/>
<dbReference type="STRING" id="9606.ENSP00000264819"/>
<dbReference type="iPTMnet" id="Q8N344"/>
<dbReference type="PhosphoSitePlus" id="Q8N344"/>
<dbReference type="BioMuta" id="MIER2"/>
<dbReference type="DMDM" id="74750947"/>
<dbReference type="jPOST" id="Q8N344"/>
<dbReference type="MassIVE" id="Q8N344"/>
<dbReference type="PaxDb" id="9606-ENSP00000264819"/>
<dbReference type="PeptideAtlas" id="Q8N344"/>
<dbReference type="ProteomicsDB" id="71762"/>
<dbReference type="Antibodypedia" id="42088">
    <property type="antibodies" value="242 antibodies from 23 providers"/>
</dbReference>
<dbReference type="DNASU" id="54531"/>
<dbReference type="Ensembl" id="ENST00000264819.7">
    <property type="protein sequence ID" value="ENSP00000264819.3"/>
    <property type="gene ID" value="ENSG00000105556.12"/>
</dbReference>
<dbReference type="GeneID" id="54531"/>
<dbReference type="KEGG" id="hsa:54531"/>
<dbReference type="MANE-Select" id="ENST00000264819.7">
    <property type="protein sequence ID" value="ENSP00000264819.3"/>
    <property type="RefSeq nucleotide sequence ID" value="NM_017550.3"/>
    <property type="RefSeq protein sequence ID" value="NP_060020.1"/>
</dbReference>
<dbReference type="UCSC" id="uc002lok.1">
    <property type="organism name" value="human"/>
</dbReference>
<dbReference type="AGR" id="HGNC:29210"/>
<dbReference type="CTD" id="54531"/>
<dbReference type="DisGeNET" id="54531"/>
<dbReference type="GeneCards" id="MIER2"/>
<dbReference type="HGNC" id="HGNC:29210">
    <property type="gene designation" value="MIER2"/>
</dbReference>
<dbReference type="HPA" id="ENSG00000105556">
    <property type="expression patterns" value="Low tissue specificity"/>
</dbReference>
<dbReference type="MIM" id="620092">
    <property type="type" value="gene"/>
</dbReference>
<dbReference type="neXtProt" id="NX_Q8N344"/>
<dbReference type="OpenTargets" id="ENSG00000105556"/>
<dbReference type="PharmGKB" id="PA134925804"/>
<dbReference type="VEuPathDB" id="HostDB:ENSG00000105556"/>
<dbReference type="eggNOG" id="KOG4329">
    <property type="taxonomic scope" value="Eukaryota"/>
</dbReference>
<dbReference type="GeneTree" id="ENSGT01030000234573"/>
<dbReference type="HOGENOM" id="CLU_027202_3_1_1"/>
<dbReference type="InParanoid" id="Q8N344"/>
<dbReference type="OMA" id="NLCPREP"/>
<dbReference type="OrthoDB" id="5916873at2759"/>
<dbReference type="PAN-GO" id="Q8N344">
    <property type="GO annotations" value="5 GO annotations based on evolutionary models"/>
</dbReference>
<dbReference type="PhylomeDB" id="Q8N344"/>
<dbReference type="TreeFam" id="TF106453"/>
<dbReference type="PathwayCommons" id="Q8N344"/>
<dbReference type="SignaLink" id="Q8N344"/>
<dbReference type="BioGRID-ORCS" id="54531">
    <property type="hits" value="9 hits in 1152 CRISPR screens"/>
</dbReference>
<dbReference type="ChiTaRS" id="MIER2">
    <property type="organism name" value="human"/>
</dbReference>
<dbReference type="GenomeRNAi" id="54531"/>
<dbReference type="Pharos" id="Q8N344">
    <property type="development level" value="Tbio"/>
</dbReference>
<dbReference type="PRO" id="PR:Q8N344"/>
<dbReference type="Proteomes" id="UP000005640">
    <property type="component" value="Chromosome 19"/>
</dbReference>
<dbReference type="RNAct" id="Q8N344">
    <property type="molecule type" value="protein"/>
</dbReference>
<dbReference type="Bgee" id="ENSG00000105556">
    <property type="expression patterns" value="Expressed in apex of heart and 141 other cell types or tissues"/>
</dbReference>
<dbReference type="ExpressionAtlas" id="Q8N344">
    <property type="expression patterns" value="baseline and differential"/>
</dbReference>
<dbReference type="GO" id="GO:0005737">
    <property type="term" value="C:cytoplasm"/>
    <property type="evidence" value="ECO:0000314"/>
    <property type="project" value="UniProtKB"/>
</dbReference>
<dbReference type="GO" id="GO:0005654">
    <property type="term" value="C:nucleoplasm"/>
    <property type="evidence" value="ECO:0000318"/>
    <property type="project" value="GO_Central"/>
</dbReference>
<dbReference type="GO" id="GO:0005634">
    <property type="term" value="C:nucleus"/>
    <property type="evidence" value="ECO:0000314"/>
    <property type="project" value="UniProtKB"/>
</dbReference>
<dbReference type="GO" id="GO:0032991">
    <property type="term" value="C:protein-containing complex"/>
    <property type="evidence" value="ECO:0000314"/>
    <property type="project" value="UniProtKB"/>
</dbReference>
<dbReference type="GO" id="GO:0042826">
    <property type="term" value="F:histone deacetylase binding"/>
    <property type="evidence" value="ECO:0000353"/>
    <property type="project" value="UniProtKB"/>
</dbReference>
<dbReference type="GO" id="GO:0003714">
    <property type="term" value="F:transcription corepressor activity"/>
    <property type="evidence" value="ECO:0000318"/>
    <property type="project" value="GO_Central"/>
</dbReference>
<dbReference type="GO" id="GO:0000122">
    <property type="term" value="P:negative regulation of transcription by RNA polymerase II"/>
    <property type="evidence" value="ECO:0000318"/>
    <property type="project" value="GO_Central"/>
</dbReference>
<dbReference type="CDD" id="cd11661">
    <property type="entry name" value="SANT_MTA3_like"/>
    <property type="match status" value="1"/>
</dbReference>
<dbReference type="FunFam" id="1.10.10.60:FF:000025">
    <property type="entry name" value="Mesoderm induction early response 1, transcriptional regulator"/>
    <property type="match status" value="1"/>
</dbReference>
<dbReference type="Gene3D" id="1.10.10.60">
    <property type="entry name" value="Homeodomain-like"/>
    <property type="match status" value="1"/>
</dbReference>
<dbReference type="InterPro" id="IPR000949">
    <property type="entry name" value="ELM2_dom"/>
</dbReference>
<dbReference type="InterPro" id="IPR009057">
    <property type="entry name" value="Homeodomain-like_sf"/>
</dbReference>
<dbReference type="InterPro" id="IPR040138">
    <property type="entry name" value="MIER/MTA"/>
</dbReference>
<dbReference type="InterPro" id="IPR001005">
    <property type="entry name" value="SANT/Myb"/>
</dbReference>
<dbReference type="InterPro" id="IPR017884">
    <property type="entry name" value="SANT_dom"/>
</dbReference>
<dbReference type="PANTHER" id="PTHR10865:SF27">
    <property type="entry name" value="MESODERM INDUCTION EARLY RESPONSE PROTEIN 2"/>
    <property type="match status" value="1"/>
</dbReference>
<dbReference type="PANTHER" id="PTHR10865">
    <property type="entry name" value="METASTASIS-ASSOCIATED PROTEIN AND MESODERM INDUCTION EARLY RESPONSE PROTEIN"/>
    <property type="match status" value="1"/>
</dbReference>
<dbReference type="Pfam" id="PF01448">
    <property type="entry name" value="ELM2"/>
    <property type="match status" value="1"/>
</dbReference>
<dbReference type="Pfam" id="PF00249">
    <property type="entry name" value="Myb_DNA-binding"/>
    <property type="match status" value="1"/>
</dbReference>
<dbReference type="SMART" id="SM01189">
    <property type="entry name" value="ELM2"/>
    <property type="match status" value="1"/>
</dbReference>
<dbReference type="SMART" id="SM00717">
    <property type="entry name" value="SANT"/>
    <property type="match status" value="1"/>
</dbReference>
<dbReference type="SUPFAM" id="SSF46689">
    <property type="entry name" value="Homeodomain-like"/>
    <property type="match status" value="1"/>
</dbReference>
<dbReference type="PROSITE" id="PS51156">
    <property type="entry name" value="ELM2"/>
    <property type="match status" value="1"/>
</dbReference>
<dbReference type="PROSITE" id="PS51293">
    <property type="entry name" value="SANT"/>
    <property type="match status" value="1"/>
</dbReference>
<reference key="1">
    <citation type="journal article" date="2004" name="Genome Res.">
        <title>The status, quality, and expansion of the NIH full-length cDNA project: the Mammalian Gene Collection (MGC).</title>
        <authorList>
            <consortium name="The MGC Project Team"/>
        </authorList>
    </citation>
    <scope>NUCLEOTIDE SEQUENCE [LARGE SCALE MRNA]</scope>
    <source>
        <tissue>Lung</tissue>
    </source>
</reference>
<reference key="2">
    <citation type="journal article" date="1999" name="DNA Res.">
        <title>Prediction of the coding sequences of unidentified human genes. XV. The complete sequences of 100 new cDNA clones from brain which code for large proteins in vitro.</title>
        <authorList>
            <person name="Nagase T."/>
            <person name="Ishikawa K."/>
            <person name="Kikuno R."/>
            <person name="Hirosawa M."/>
            <person name="Nomura N."/>
            <person name="Ohara O."/>
        </authorList>
    </citation>
    <scope>NUCLEOTIDE SEQUENCE [LARGE SCALE MRNA] OF 2-545</scope>
    <source>
        <tissue>Brain</tissue>
    </source>
</reference>
<reference key="3">
    <citation type="submission" date="2004-01" db="EMBL/GenBank/DDBJ databases">
        <authorList>
            <person name="Ohara O."/>
            <person name="Nagase T."/>
            <person name="Kikuno R."/>
        </authorList>
    </citation>
    <scope>SEQUENCE REVISION</scope>
</reference>
<reference key="4">
    <citation type="journal article" date="2008" name="Mol. Cell">
        <title>CDYL bridges REST and histone methyltransferases for gene repression and suppression of cellular transformation.</title>
        <authorList>
            <person name="Mulligan P."/>
            <person name="Westbrook T.F."/>
            <person name="Ottinger M."/>
            <person name="Pavlova N."/>
            <person name="Chang B."/>
            <person name="Macia E."/>
            <person name="Shi Y.J."/>
            <person name="Barretina J."/>
            <person name="Liu J."/>
            <person name="Howley P.M."/>
            <person name="Elledge S.J."/>
            <person name="Shi Y."/>
        </authorList>
    </citation>
    <scope>IDENTIFICATION IN A COMPLEX WITH CDYL; MIER1; HDAC1 AND HDAC2</scope>
</reference>
<reference key="5">
    <citation type="journal article" date="2013" name="J. Proteome Res.">
        <title>Toward a comprehensive characterization of a human cancer cell phosphoproteome.</title>
        <authorList>
            <person name="Zhou H."/>
            <person name="Di Palma S."/>
            <person name="Preisinger C."/>
            <person name="Peng M."/>
            <person name="Polat A.N."/>
            <person name="Heck A.J."/>
            <person name="Mohammed S."/>
        </authorList>
    </citation>
    <scope>PHOSPHORYLATION [LARGE SCALE ANALYSIS] AT SER-11</scope>
    <scope>IDENTIFICATION BY MASS SPECTROMETRY [LARGE SCALE ANALYSIS]</scope>
    <source>
        <tissue>Cervix carcinoma</tissue>
        <tissue>Erythroleukemia</tissue>
    </source>
</reference>
<reference key="6">
    <citation type="journal article" date="2016" name="J. Clin. Invest.">
        <title>EPHB4 kinase-inactivating mutations cause autosomal dominant lymphatic-related hydrops fetalis.</title>
        <authorList>
            <person name="Martin-Almedina S."/>
            <person name="Martinez-Corral I."/>
            <person name="Holdhus R."/>
            <person name="Vicente A."/>
            <person name="Fotiou E."/>
            <person name="Lin S."/>
            <person name="Petersen K."/>
            <person name="Simpson M.A."/>
            <person name="Hoischen A."/>
            <person name="Gilissen C."/>
            <person name="Jeffery H."/>
            <person name="Atton G."/>
            <person name="Karapouliou C."/>
            <person name="Brice G."/>
            <person name="Gordon K."/>
            <person name="Wiseman J.W."/>
            <person name="Wedin M."/>
            <person name="Rockson S.G."/>
            <person name="Jeffery S."/>
            <person name="Mortimer P.S."/>
            <person name="Snyder M.P."/>
            <person name="Berland S."/>
            <person name="Mansour S."/>
            <person name="Makinen T."/>
            <person name="Ostergaard P."/>
        </authorList>
    </citation>
    <scope>VARIANT TRP-289</scope>
</reference>
<accession>Q8N344</accession>
<accession>Q9ULM7</accession>
<protein>
    <recommendedName>
        <fullName>Mesoderm induction early response protein 2</fullName>
        <shortName>Mi-er2</shortName>
    </recommendedName>
</protein>
<feature type="chain" id="PRO_0000313678" description="Mesoderm induction early response protein 2">
    <location>
        <begin position="1"/>
        <end position="545"/>
    </location>
</feature>
<feature type="domain" description="ELM2" evidence="2">
    <location>
        <begin position="195"/>
        <end position="292"/>
    </location>
</feature>
<feature type="domain" description="SANT" evidence="3">
    <location>
        <begin position="297"/>
        <end position="349"/>
    </location>
</feature>
<feature type="region of interest" description="Disordered" evidence="4">
    <location>
        <begin position="100"/>
        <end position="189"/>
    </location>
</feature>
<feature type="region of interest" description="Disordered" evidence="4">
    <location>
        <begin position="364"/>
        <end position="464"/>
    </location>
</feature>
<feature type="compositionally biased region" description="Polar residues" evidence="4">
    <location>
        <begin position="140"/>
        <end position="153"/>
    </location>
</feature>
<feature type="modified residue" description="Phosphoserine" evidence="8">
    <location>
        <position position="11"/>
    </location>
</feature>
<feature type="sequence variant" id="VAR_037695" description="In dbSNP:rs7507468.">
    <original>D</original>
    <variation>N</variation>
    <location>
        <position position="68"/>
    </location>
</feature>
<feature type="sequence variant" id="VAR_037696" description="In dbSNP:rs10421231.">
    <original>D</original>
    <variation>N</variation>
    <location>
        <position position="104"/>
    </location>
</feature>
<feature type="sequence variant" id="VAR_078065" description="In dbSNP:rs148482834." evidence="6">
    <original>R</original>
    <variation>W</variation>
    <location>
        <position position="289"/>
    </location>
</feature>
<feature type="sequence variant" id="VAR_037697" description="In dbSNP:rs34129568.">
    <original>P</original>
    <variation>S</variation>
    <location>
        <position position="464"/>
    </location>
</feature>
<feature type="sequence variant" id="VAR_037698" description="In dbSNP:rs35042658.">
    <original>S</original>
    <variation>G</variation>
    <location>
        <position position="485"/>
    </location>
</feature>